<organism>
    <name type="scientific">Heliobacterium modesticaldum (strain ATCC 51547 / Ice1)</name>
    <dbReference type="NCBI Taxonomy" id="498761"/>
    <lineage>
        <taxon>Bacteria</taxon>
        <taxon>Bacillati</taxon>
        <taxon>Bacillota</taxon>
        <taxon>Clostridia</taxon>
        <taxon>Eubacteriales</taxon>
        <taxon>Heliobacteriaceae</taxon>
        <taxon>Heliomicrobium</taxon>
    </lineage>
</organism>
<keyword id="KW-1185">Reference proteome</keyword>
<keyword id="KW-0687">Ribonucleoprotein</keyword>
<keyword id="KW-0689">Ribosomal protein</keyword>
<evidence type="ECO:0000255" key="1">
    <source>
        <dbReference type="HAMAP-Rule" id="MF_00402"/>
    </source>
</evidence>
<evidence type="ECO:0000305" key="2"/>
<gene>
    <name evidence="1" type="primary">rplS</name>
    <name type="ordered locus">Helmi_21190</name>
    <name type="ORF">HM1_2188</name>
</gene>
<protein>
    <recommendedName>
        <fullName evidence="1">Large ribosomal subunit protein bL19</fullName>
    </recommendedName>
    <alternativeName>
        <fullName evidence="2">50S ribosomal protein L19</fullName>
    </alternativeName>
</protein>
<sequence>MQDIIRQIEAEQLRKDIPDFKPGDTVKVHVKVVEGNRERIQLFEGIVIKRRGGGLSETFTVRRVSYGVAVERTFLVHSPRLDKIEVVRRGRVRRAKLYYLRDLSGKAARIRDKR</sequence>
<dbReference type="EMBL" id="CP000930">
    <property type="protein sequence ID" value="ABZ84744.1"/>
    <property type="molecule type" value="Genomic_DNA"/>
</dbReference>
<dbReference type="RefSeq" id="WP_012283244.1">
    <property type="nucleotide sequence ID" value="NC_010337.2"/>
</dbReference>
<dbReference type="SMR" id="B0TH69"/>
<dbReference type="STRING" id="498761.HM1_2188"/>
<dbReference type="KEGG" id="hmo:HM1_2188"/>
<dbReference type="eggNOG" id="COG0335">
    <property type="taxonomic scope" value="Bacteria"/>
</dbReference>
<dbReference type="HOGENOM" id="CLU_103507_2_2_9"/>
<dbReference type="OrthoDB" id="9803541at2"/>
<dbReference type="Proteomes" id="UP000008550">
    <property type="component" value="Chromosome"/>
</dbReference>
<dbReference type="GO" id="GO:0022625">
    <property type="term" value="C:cytosolic large ribosomal subunit"/>
    <property type="evidence" value="ECO:0007669"/>
    <property type="project" value="TreeGrafter"/>
</dbReference>
<dbReference type="GO" id="GO:0003735">
    <property type="term" value="F:structural constituent of ribosome"/>
    <property type="evidence" value="ECO:0007669"/>
    <property type="project" value="InterPro"/>
</dbReference>
<dbReference type="GO" id="GO:0006412">
    <property type="term" value="P:translation"/>
    <property type="evidence" value="ECO:0007669"/>
    <property type="project" value="UniProtKB-UniRule"/>
</dbReference>
<dbReference type="FunFam" id="2.30.30.790:FF:000001">
    <property type="entry name" value="50S ribosomal protein L19"/>
    <property type="match status" value="1"/>
</dbReference>
<dbReference type="Gene3D" id="2.30.30.790">
    <property type="match status" value="1"/>
</dbReference>
<dbReference type="HAMAP" id="MF_00402">
    <property type="entry name" value="Ribosomal_bL19"/>
    <property type="match status" value="1"/>
</dbReference>
<dbReference type="InterPro" id="IPR001857">
    <property type="entry name" value="Ribosomal_bL19"/>
</dbReference>
<dbReference type="InterPro" id="IPR018257">
    <property type="entry name" value="Ribosomal_bL19_CS"/>
</dbReference>
<dbReference type="InterPro" id="IPR038657">
    <property type="entry name" value="Ribosomal_bL19_sf"/>
</dbReference>
<dbReference type="InterPro" id="IPR008991">
    <property type="entry name" value="Translation_prot_SH3-like_sf"/>
</dbReference>
<dbReference type="NCBIfam" id="TIGR01024">
    <property type="entry name" value="rplS_bact"/>
    <property type="match status" value="1"/>
</dbReference>
<dbReference type="PANTHER" id="PTHR15680:SF9">
    <property type="entry name" value="LARGE RIBOSOMAL SUBUNIT PROTEIN BL19M"/>
    <property type="match status" value="1"/>
</dbReference>
<dbReference type="PANTHER" id="PTHR15680">
    <property type="entry name" value="RIBOSOMAL PROTEIN L19"/>
    <property type="match status" value="1"/>
</dbReference>
<dbReference type="Pfam" id="PF01245">
    <property type="entry name" value="Ribosomal_L19"/>
    <property type="match status" value="1"/>
</dbReference>
<dbReference type="PIRSF" id="PIRSF002191">
    <property type="entry name" value="Ribosomal_L19"/>
    <property type="match status" value="1"/>
</dbReference>
<dbReference type="PRINTS" id="PR00061">
    <property type="entry name" value="RIBOSOMALL19"/>
</dbReference>
<dbReference type="SUPFAM" id="SSF50104">
    <property type="entry name" value="Translation proteins SH3-like domain"/>
    <property type="match status" value="1"/>
</dbReference>
<dbReference type="PROSITE" id="PS01015">
    <property type="entry name" value="RIBOSOMAL_L19"/>
    <property type="match status" value="1"/>
</dbReference>
<proteinExistence type="inferred from homology"/>
<feature type="chain" id="PRO_1000193850" description="Large ribosomal subunit protein bL19">
    <location>
        <begin position="1"/>
        <end position="114"/>
    </location>
</feature>
<accession>B0TH69</accession>
<reference key="1">
    <citation type="journal article" date="2008" name="J. Bacteriol.">
        <title>The genome of Heliobacterium modesticaldum, a phototrophic representative of the Firmicutes containing the simplest photosynthetic apparatus.</title>
        <authorList>
            <person name="Sattley W.M."/>
            <person name="Madigan M.T."/>
            <person name="Swingley W.D."/>
            <person name="Cheung P.C."/>
            <person name="Clocksin K.M."/>
            <person name="Conrad A.L."/>
            <person name="Dejesa L.C."/>
            <person name="Honchak B.M."/>
            <person name="Jung D.O."/>
            <person name="Karbach L.E."/>
            <person name="Kurdoglu A."/>
            <person name="Lahiri S."/>
            <person name="Mastrian S.D."/>
            <person name="Page L.E."/>
            <person name="Taylor H.L."/>
            <person name="Wang Z.T."/>
            <person name="Raymond J."/>
            <person name="Chen M."/>
            <person name="Blankenship R.E."/>
            <person name="Touchman J.W."/>
        </authorList>
    </citation>
    <scope>NUCLEOTIDE SEQUENCE [LARGE SCALE GENOMIC DNA]</scope>
    <source>
        <strain>ATCC 51547 / Ice1</strain>
    </source>
</reference>
<name>RL19_HELMI</name>
<comment type="function">
    <text evidence="1">This protein is located at the 30S-50S ribosomal subunit interface and may play a role in the structure and function of the aminoacyl-tRNA binding site.</text>
</comment>
<comment type="similarity">
    <text evidence="1">Belongs to the bacterial ribosomal protein bL19 family.</text>
</comment>